<sequence length="470" mass="53201">MCENQLKTKADGTAQIEVIPCKICGDKSSGIHYGVITCEGCKGFFRRSQQNNASYSCPRQRNCLIDRTNRNRCQHCRLQKCLALGMSRDAVKFGRMSKKQRDSLYAEVQKHQQRLQEQRQQQSGEAEALARVYSSSISNGLSNLNTETGGTYANGHVIDLPKSEGYYNIDSGQPSPDQSGLDMTGIKQIKQEPIYDLTSVHNLFTYSSFNNGQLAPGITMSEIDRIAQNIIKSHLETCQYTMEELHQLAWQTHTYEEIKAYQSKSREALWQQCAIQITHAIQYVVEFAKRITGFMELCQNDQILLLKSGCLEVVLVRMCRAFNPLNNTVLFEGKYGGMQMFKALGSDDLVNEAFDFAKNLCSLQLTEEEIALFSSAVLISPDRAWLLEPRKVQKLQEKIYFALQHVIQKNHLDDETLAKLIAKIPTITAVCNLHGEKLQVFKQSHPDIVNTLFPPLYKELFNPDCAAVCK</sequence>
<comment type="function">
    <text evidence="7 8">Nuclear receptor that binds DNA as a monomer to ROR response elements (RORE) containing a single core motif half-site 5'-AGGTCA-3' preceded by a short A-T-rich sequence. Considered to have intrinsic transcriptional activity, have some natural ligands such as all-trans retinoic acid (ATRA) and other retinoids which act as inverse agonists repressing the transcriptional activity. Required for normal postnatal development of rod and cone photoreceptor cells. Modulates rod photoreceptors differentiation at least by inducing the transcription factor NRL-mediated pathway. In cone photoreceptor cells, regulates transcription of OPN1SW. Involved in the regulation of the period length and stability of the circadian rhythm. May control cytoarchitectural patterning of neocortical neurons during development. May act in a dose-dependent manner to regulate barrel formation upon innervation of layer IV neurons by thalamocortical axons. May play a role in the suppression of osteoblastic differentiation through the inhibition of RUNX2 transcriptional activity.</text>
</comment>
<comment type="function">
    <molecule>Isoform 1</molecule>
    <text evidence="1">Critical for hindlimb motor control and for the differentiation of amacrine and horizontal cells in the retina. Regulates the expression of PTF1A synergistically with FOXN4 (By similarity).</text>
</comment>
<comment type="subunit">
    <text evidence="6 7 8">Monomer. Interacts with CRX.</text>
</comment>
<comment type="subcellular location">
    <subcellularLocation>
        <location evidence="2">Nucleus</location>
        <location evidence="2">Nucleoplasm</location>
    </subcellularLocation>
</comment>
<comment type="alternative products">
    <event type="alternative promoter"/>
    <isoform>
        <id>P45446-2</id>
        <name>2</name>
        <name>ROR-beta 2</name>
        <sequence type="displayed"/>
    </isoform>
    <isoform>
        <id>P45446-1</id>
        <name>1</name>
        <name>ROR-beta 1</name>
        <sequence type="described" ref="VSP_022577"/>
    </isoform>
</comment>
<comment type="tissue specificity">
    <text evidence="9 10">Isoform 2 expressed with circadian rhythm in eye and pineal gland. Isoform 1 expressed in retina cortex, thalamus, and hypothalamus.</text>
</comment>
<comment type="induction">
    <molecule>Isoform 2</molecule>
    <text evidence="10">Oscillates diurnally in eye and pineal gland, with highest levels shortly after midnight.</text>
</comment>
<comment type="domain">
    <text evidence="6 8">AF-2 (activation function-2) motif is required for recruiting coregulators containing the LXXLL motif, such as NCOA1, and control the transactivational activity (PubMed:11689423, PubMed:8816759).</text>
</comment>
<comment type="miscellaneous">
    <molecule>Isoform 2</molecule>
    <text>Shows a 4-fold higher transcriptional activation of an optimal promoter compared to isoform 1.</text>
</comment>
<comment type="similarity">
    <text evidence="11">Belongs to the nuclear hormone receptor family. NR1 subfamily.</text>
</comment>
<comment type="sequence caution" evidence="11">
    <conflict type="erroneous initiation">
        <sequence resource="EMBL-CDS" id="AAA42095"/>
    </conflict>
    <text>Extended N-terminus.</text>
</comment>
<name>RORB_RAT</name>
<evidence type="ECO:0000250" key="1">
    <source>
        <dbReference type="UniProtKB" id="Q8R1B8"/>
    </source>
</evidence>
<evidence type="ECO:0000250" key="2">
    <source>
        <dbReference type="UniProtKB" id="Q92753"/>
    </source>
</evidence>
<evidence type="ECO:0000255" key="3">
    <source>
        <dbReference type="PROSITE-ProRule" id="PRU00407"/>
    </source>
</evidence>
<evidence type="ECO:0000255" key="4">
    <source>
        <dbReference type="PROSITE-ProRule" id="PRU01189"/>
    </source>
</evidence>
<evidence type="ECO:0000256" key="5">
    <source>
        <dbReference type="SAM" id="MobiDB-lite"/>
    </source>
</evidence>
<evidence type="ECO:0000269" key="6">
    <source>
    </source>
</evidence>
<evidence type="ECO:0000269" key="7">
    <source>
    </source>
</evidence>
<evidence type="ECO:0000269" key="8">
    <source>
    </source>
</evidence>
<evidence type="ECO:0000269" key="9">
    <source>
    </source>
</evidence>
<evidence type="ECO:0000269" key="10">
    <source>
    </source>
</evidence>
<evidence type="ECO:0000305" key="11"/>
<evidence type="ECO:0007829" key="12">
    <source>
        <dbReference type="PDB" id="1NQ7"/>
    </source>
</evidence>
<dbReference type="EMBL" id="L14610">
    <property type="protein sequence ID" value="AAA42095.1"/>
    <property type="status" value="ALT_INIT"/>
    <property type="molecule type" value="Genomic_DNA"/>
</dbReference>
<dbReference type="PIR" id="I65219">
    <property type="entry name" value="I65219"/>
</dbReference>
<dbReference type="PDB" id="1K4W">
    <property type="method" value="X-ray"/>
    <property type="resolution" value="1.90 A"/>
    <property type="chains" value="A=212-463"/>
</dbReference>
<dbReference type="PDB" id="1N4H">
    <property type="method" value="X-ray"/>
    <property type="resolution" value="2.10 A"/>
    <property type="chains" value="A=212-470"/>
</dbReference>
<dbReference type="PDB" id="1NQ7">
    <property type="method" value="X-ray"/>
    <property type="resolution" value="1.50 A"/>
    <property type="chains" value="A=219-462"/>
</dbReference>
<dbReference type="PDBsum" id="1K4W"/>
<dbReference type="PDBsum" id="1N4H"/>
<dbReference type="PDBsum" id="1NQ7"/>
<dbReference type="SMR" id="P45446"/>
<dbReference type="FunCoup" id="P45446">
    <property type="interactions" value="854"/>
</dbReference>
<dbReference type="STRING" id="10116.ENSRNOP00000018137"/>
<dbReference type="BindingDB" id="P45446"/>
<dbReference type="ChEMBL" id="CHEMBL4105721"/>
<dbReference type="PhosphoSitePlus" id="P45446"/>
<dbReference type="PaxDb" id="10116-ENSRNOP00000018137"/>
<dbReference type="UCSC" id="RGD:1306778">
    <molecule id="P45446-2"/>
    <property type="organism name" value="rat"/>
</dbReference>
<dbReference type="AGR" id="RGD:1306778"/>
<dbReference type="RGD" id="1306778">
    <property type="gene designation" value="Rorb"/>
</dbReference>
<dbReference type="eggNOG" id="KOG4216">
    <property type="taxonomic scope" value="Eukaryota"/>
</dbReference>
<dbReference type="InParanoid" id="P45446"/>
<dbReference type="PhylomeDB" id="P45446"/>
<dbReference type="Reactome" id="R-RNO-383280">
    <property type="pathway name" value="Nuclear Receptor transcription pathway"/>
</dbReference>
<dbReference type="EvolutionaryTrace" id="P45446"/>
<dbReference type="PRO" id="PR:P45446"/>
<dbReference type="Proteomes" id="UP000002494">
    <property type="component" value="Unplaced"/>
</dbReference>
<dbReference type="GO" id="GO:0005654">
    <property type="term" value="C:nucleoplasm"/>
    <property type="evidence" value="ECO:0000250"/>
    <property type="project" value="UniProtKB"/>
</dbReference>
<dbReference type="GO" id="GO:0005634">
    <property type="term" value="C:nucleus"/>
    <property type="evidence" value="ECO:0000250"/>
    <property type="project" value="UniProtKB"/>
</dbReference>
<dbReference type="GO" id="GO:0001228">
    <property type="term" value="F:DNA-binding transcription activator activity, RNA polymerase II-specific"/>
    <property type="evidence" value="ECO:0000266"/>
    <property type="project" value="RGD"/>
</dbReference>
<dbReference type="GO" id="GO:0003700">
    <property type="term" value="F:DNA-binding transcription factor activity"/>
    <property type="evidence" value="ECO:0000314"/>
    <property type="project" value="UniProtKB"/>
</dbReference>
<dbReference type="GO" id="GO:0008502">
    <property type="term" value="F:melatonin receptor activity"/>
    <property type="evidence" value="ECO:0000314"/>
    <property type="project" value="RGD"/>
</dbReference>
<dbReference type="GO" id="GO:0004879">
    <property type="term" value="F:nuclear receptor activity"/>
    <property type="evidence" value="ECO:0000318"/>
    <property type="project" value="GO_Central"/>
</dbReference>
<dbReference type="GO" id="GO:0000978">
    <property type="term" value="F:RNA polymerase II cis-regulatory region sequence-specific DNA binding"/>
    <property type="evidence" value="ECO:0000266"/>
    <property type="project" value="RGD"/>
</dbReference>
<dbReference type="GO" id="GO:0043565">
    <property type="term" value="F:sequence-specific DNA binding"/>
    <property type="evidence" value="ECO:0000266"/>
    <property type="project" value="RGD"/>
</dbReference>
<dbReference type="GO" id="GO:1990837">
    <property type="term" value="F:sequence-specific double-stranded DNA binding"/>
    <property type="evidence" value="ECO:0000266"/>
    <property type="project" value="RGD"/>
</dbReference>
<dbReference type="GO" id="GO:0008270">
    <property type="term" value="F:zinc ion binding"/>
    <property type="evidence" value="ECO:0007669"/>
    <property type="project" value="UniProtKB-KW"/>
</dbReference>
<dbReference type="GO" id="GO:0035881">
    <property type="term" value="P:amacrine cell differentiation"/>
    <property type="evidence" value="ECO:0000250"/>
    <property type="project" value="UniProtKB"/>
</dbReference>
<dbReference type="GO" id="GO:0071300">
    <property type="term" value="P:cellular response to retinoic acid"/>
    <property type="evidence" value="ECO:0000314"/>
    <property type="project" value="UniProtKB"/>
</dbReference>
<dbReference type="GO" id="GO:0007623">
    <property type="term" value="P:circadian rhythm"/>
    <property type="evidence" value="ECO:0000270"/>
    <property type="project" value="RGD"/>
</dbReference>
<dbReference type="GO" id="GO:0042462">
    <property type="term" value="P:eye photoreceptor cell development"/>
    <property type="evidence" value="ECO:0000250"/>
    <property type="project" value="UniProtKB"/>
</dbReference>
<dbReference type="GO" id="GO:0045892">
    <property type="term" value="P:negative regulation of DNA-templated transcription"/>
    <property type="evidence" value="ECO:0000314"/>
    <property type="project" value="UniProtKB"/>
</dbReference>
<dbReference type="GO" id="GO:0045668">
    <property type="term" value="P:negative regulation of osteoblast differentiation"/>
    <property type="evidence" value="ECO:0000250"/>
    <property type="project" value="UniProtKB"/>
</dbReference>
<dbReference type="GO" id="GO:0045893">
    <property type="term" value="P:positive regulation of DNA-templated transcription"/>
    <property type="evidence" value="ECO:0000314"/>
    <property type="project" value="UniProtKB"/>
</dbReference>
<dbReference type="GO" id="GO:0045944">
    <property type="term" value="P:positive regulation of transcription by RNA polymerase II"/>
    <property type="evidence" value="ECO:0000266"/>
    <property type="project" value="RGD"/>
</dbReference>
<dbReference type="GO" id="GO:0042752">
    <property type="term" value="P:regulation of circadian rhythm"/>
    <property type="evidence" value="ECO:0000250"/>
    <property type="project" value="UniProtKB"/>
</dbReference>
<dbReference type="GO" id="GO:0006357">
    <property type="term" value="P:regulation of transcription by RNA polymerase II"/>
    <property type="evidence" value="ECO:0000318"/>
    <property type="project" value="GO_Central"/>
</dbReference>
<dbReference type="GO" id="GO:0009725">
    <property type="term" value="P:response to hormone"/>
    <property type="evidence" value="ECO:0000270"/>
    <property type="project" value="RGD"/>
</dbReference>
<dbReference type="GO" id="GO:0060041">
    <property type="term" value="P:retina development in camera-type eye"/>
    <property type="evidence" value="ECO:0000250"/>
    <property type="project" value="UniProtKB"/>
</dbReference>
<dbReference type="GO" id="GO:0046549">
    <property type="term" value="P:retinal cone cell development"/>
    <property type="evidence" value="ECO:0000250"/>
    <property type="project" value="UniProtKB"/>
</dbReference>
<dbReference type="GO" id="GO:0046548">
    <property type="term" value="P:retinal rod cell development"/>
    <property type="evidence" value="ECO:0000250"/>
    <property type="project" value="UniProtKB"/>
</dbReference>
<dbReference type="GO" id="GO:0060221">
    <property type="term" value="P:retinal rod cell differentiation"/>
    <property type="evidence" value="ECO:0000266"/>
    <property type="project" value="RGD"/>
</dbReference>
<dbReference type="GO" id="GO:0007601">
    <property type="term" value="P:visual perception"/>
    <property type="evidence" value="ECO:0007669"/>
    <property type="project" value="UniProtKB-KW"/>
</dbReference>
<dbReference type="CDD" id="cd06968">
    <property type="entry name" value="NR_DBD_ROR"/>
    <property type="match status" value="1"/>
</dbReference>
<dbReference type="CDD" id="cd06939">
    <property type="entry name" value="NR_LBD_ROR_like"/>
    <property type="match status" value="1"/>
</dbReference>
<dbReference type="FunFam" id="1.10.565.10:FF:000005">
    <property type="entry name" value="Nuclear orphan receptor ROR-beta"/>
    <property type="match status" value="1"/>
</dbReference>
<dbReference type="FunFam" id="3.30.50.10:FF:000003">
    <property type="entry name" value="Nuclear orphan receptor ROR-beta"/>
    <property type="match status" value="1"/>
</dbReference>
<dbReference type="Gene3D" id="3.30.50.10">
    <property type="entry name" value="Erythroid Transcription Factor GATA-1, subunit A"/>
    <property type="match status" value="1"/>
</dbReference>
<dbReference type="Gene3D" id="1.10.565.10">
    <property type="entry name" value="Retinoid X Receptor"/>
    <property type="match status" value="1"/>
</dbReference>
<dbReference type="IDEAL" id="IID50142"/>
<dbReference type="InterPro" id="IPR035500">
    <property type="entry name" value="NHR-like_dom_sf"/>
</dbReference>
<dbReference type="InterPro" id="IPR044101">
    <property type="entry name" value="NR_DBD_ROR"/>
</dbReference>
<dbReference type="InterPro" id="IPR000536">
    <property type="entry name" value="Nucl_hrmn_rcpt_lig-bd"/>
</dbReference>
<dbReference type="InterPro" id="IPR001723">
    <property type="entry name" value="Nuclear_hrmn_rcpt"/>
</dbReference>
<dbReference type="InterPro" id="IPR003079">
    <property type="entry name" value="ROR_rcpt"/>
</dbReference>
<dbReference type="InterPro" id="IPR001628">
    <property type="entry name" value="Znf_hrmn_rcpt"/>
</dbReference>
<dbReference type="InterPro" id="IPR013088">
    <property type="entry name" value="Znf_NHR/GATA"/>
</dbReference>
<dbReference type="PANTHER" id="PTHR45805">
    <property type="entry name" value="NUCLEAR HORMONE RECEPTOR HR3-RELATED"/>
    <property type="match status" value="1"/>
</dbReference>
<dbReference type="PANTHER" id="PTHR45805:SF6">
    <property type="entry name" value="NUCLEAR RECEPTOR ROR-BETA"/>
    <property type="match status" value="1"/>
</dbReference>
<dbReference type="Pfam" id="PF00104">
    <property type="entry name" value="Hormone_recep"/>
    <property type="match status" value="1"/>
</dbReference>
<dbReference type="Pfam" id="PF00105">
    <property type="entry name" value="zf-C4"/>
    <property type="match status" value="1"/>
</dbReference>
<dbReference type="PRINTS" id="PR01293">
    <property type="entry name" value="RORNUCRECPTR"/>
</dbReference>
<dbReference type="PRINTS" id="PR00398">
    <property type="entry name" value="STRDHORMONER"/>
</dbReference>
<dbReference type="PRINTS" id="PR00047">
    <property type="entry name" value="STROIDFINGER"/>
</dbReference>
<dbReference type="SMART" id="SM00430">
    <property type="entry name" value="HOLI"/>
    <property type="match status" value="1"/>
</dbReference>
<dbReference type="SMART" id="SM00399">
    <property type="entry name" value="ZnF_C4"/>
    <property type="match status" value="1"/>
</dbReference>
<dbReference type="SUPFAM" id="SSF57716">
    <property type="entry name" value="Glucocorticoid receptor-like (DNA-binding domain)"/>
    <property type="match status" value="1"/>
</dbReference>
<dbReference type="SUPFAM" id="SSF48508">
    <property type="entry name" value="Nuclear receptor ligand-binding domain"/>
    <property type="match status" value="1"/>
</dbReference>
<dbReference type="PROSITE" id="PS51843">
    <property type="entry name" value="NR_LBD"/>
    <property type="match status" value="1"/>
</dbReference>
<dbReference type="PROSITE" id="PS00031">
    <property type="entry name" value="NUCLEAR_REC_DBD_1"/>
    <property type="match status" value="1"/>
</dbReference>
<dbReference type="PROSITE" id="PS51030">
    <property type="entry name" value="NUCLEAR_REC_DBD_2"/>
    <property type="match status" value="1"/>
</dbReference>
<feature type="chain" id="PRO_0000053516" description="Nuclear receptor ROR-beta">
    <location>
        <begin position="1"/>
        <end position="470"/>
    </location>
</feature>
<feature type="domain" description="NR LBD" evidence="4">
    <location>
        <begin position="222"/>
        <end position="460"/>
    </location>
</feature>
<feature type="DNA-binding region" description="Nuclear receptor" evidence="3">
    <location>
        <begin position="18"/>
        <end position="93"/>
    </location>
</feature>
<feature type="zinc finger region" description="NR C4-type" evidence="3">
    <location>
        <begin position="21"/>
        <end position="41"/>
    </location>
</feature>
<feature type="zinc finger region" description="NR C4-type" evidence="3">
    <location>
        <begin position="57"/>
        <end position="81"/>
    </location>
</feature>
<feature type="region of interest" description="Disordered" evidence="5">
    <location>
        <begin position="104"/>
        <end position="127"/>
    </location>
</feature>
<feature type="short sequence motif" description="AF-2">
    <location>
        <begin position="456"/>
        <end position="461"/>
    </location>
</feature>
<feature type="compositionally biased region" description="Basic and acidic residues" evidence="5">
    <location>
        <begin position="104"/>
        <end position="117"/>
    </location>
</feature>
<feature type="splice variant" id="VSP_022577" description="In isoform 1." evidence="11">
    <original>MCENQLKTKADGT</original>
    <variation>MR</variation>
    <location>
        <begin position="1"/>
        <end position="13"/>
    </location>
</feature>
<feature type="mutagenesis site" description="Inhibits transactivation activity." evidence="6">
    <original>A</original>
    <variation>F</variation>
    <variation>V</variation>
    <variation>S</variation>
    <location>
        <position position="280"/>
    </location>
</feature>
<feature type="mutagenesis site" description="No effect on transactivation activity." evidence="6">
    <original>A</original>
    <variation>G</variation>
    <location>
        <position position="280"/>
    </location>
</feature>
<feature type="mutagenesis site" description="Inhibits transactivation activity." evidence="6">
    <original>Y</original>
    <variation>A</variation>
    <location>
        <position position="457"/>
    </location>
</feature>
<feature type="mutagenesis site" description="Inhibits transactivation activity." evidence="6">
    <original>E</original>
    <variation>A</variation>
    <location>
        <position position="459"/>
    </location>
</feature>
<feature type="helix" evidence="12">
    <location>
        <begin position="220"/>
        <end position="237"/>
    </location>
</feature>
<feature type="helix" evidence="12">
    <location>
        <begin position="242"/>
        <end position="248"/>
    </location>
</feature>
<feature type="helix" evidence="12">
    <location>
        <begin position="255"/>
        <end position="263"/>
    </location>
</feature>
<feature type="helix" evidence="12">
    <location>
        <begin position="266"/>
        <end position="289"/>
    </location>
</feature>
<feature type="helix" evidence="12">
    <location>
        <begin position="292"/>
        <end position="295"/>
    </location>
</feature>
<feature type="helix" evidence="12">
    <location>
        <begin position="299"/>
        <end position="318"/>
    </location>
</feature>
<feature type="helix" evidence="12">
    <location>
        <begin position="319"/>
        <end position="321"/>
    </location>
</feature>
<feature type="turn" evidence="12">
    <location>
        <begin position="324"/>
        <end position="327"/>
    </location>
</feature>
<feature type="strand" evidence="12">
    <location>
        <begin position="328"/>
        <end position="331"/>
    </location>
</feature>
<feature type="strand" evidence="12">
    <location>
        <begin position="334"/>
        <end position="337"/>
    </location>
</feature>
<feature type="helix" evidence="12">
    <location>
        <begin position="338"/>
        <end position="344"/>
    </location>
</feature>
<feature type="helix" evidence="12">
    <location>
        <begin position="347"/>
        <end position="361"/>
    </location>
</feature>
<feature type="helix" evidence="12">
    <location>
        <begin position="367"/>
        <end position="378"/>
    </location>
</feature>
<feature type="helix" evidence="12">
    <location>
        <begin position="389"/>
        <end position="410"/>
    </location>
</feature>
<feature type="helix" evidence="12">
    <location>
        <begin position="416"/>
        <end position="422"/>
    </location>
</feature>
<feature type="helix" evidence="12">
    <location>
        <begin position="424"/>
        <end position="444"/>
    </location>
</feature>
<feature type="helix" evidence="12">
    <location>
        <begin position="446"/>
        <end position="451"/>
    </location>
</feature>
<feature type="helix" evidence="12">
    <location>
        <begin position="455"/>
        <end position="461"/>
    </location>
</feature>
<accession>P45446</accession>
<keyword id="KW-0002">3D-structure</keyword>
<keyword id="KW-0010">Activator</keyword>
<keyword id="KW-0877">Alternative promoter usage</keyword>
<keyword id="KW-0090">Biological rhythms</keyword>
<keyword id="KW-0217">Developmental protein</keyword>
<keyword id="KW-0238">DNA-binding</keyword>
<keyword id="KW-0479">Metal-binding</keyword>
<keyword id="KW-0539">Nucleus</keyword>
<keyword id="KW-0675">Receptor</keyword>
<keyword id="KW-1185">Reference proteome</keyword>
<keyword id="KW-0716">Sensory transduction</keyword>
<keyword id="KW-0804">Transcription</keyword>
<keyword id="KW-0805">Transcription regulation</keyword>
<keyword id="KW-0844">Vision</keyword>
<keyword id="KW-0862">Zinc</keyword>
<keyword id="KW-0863">Zinc-finger</keyword>
<protein>
    <recommendedName>
        <fullName>Nuclear receptor ROR-beta</fullName>
    </recommendedName>
    <alternativeName>
        <fullName>Nuclear receptor RZR-beta</fullName>
    </alternativeName>
    <alternativeName>
        <fullName>Nuclear receptor subfamily 1 group F member 2</fullName>
    </alternativeName>
    <alternativeName>
        <fullName>Retinoid-related orphan receptor-beta</fullName>
    </alternativeName>
</protein>
<reference key="1">
    <citation type="journal article" date="1994" name="Mol. Endocrinol.">
        <title>RZRs, a new family of retinoid-related orphan receptors that function as both monomers and homodimers.</title>
        <authorList>
            <person name="Carlberg C."/>
            <person name="Hooft van Huijsduijnen R."/>
            <person name="Staple J.K."/>
            <person name="Delamarter J.F."/>
            <person name="Becker-Andre M."/>
        </authorList>
    </citation>
    <scope>NUCLEOTIDE SEQUENCE [GENOMIC DNA] (ISOFORM 1)</scope>
    <source>
        <strain>Sprague-Dawley</strain>
        <tissue>Brain</tissue>
    </source>
</reference>
<reference key="2">
    <citation type="journal article" date="1998" name="Gene">
        <title>A novel isoform of the orphan nuclear receptor RORbeta is specifically expressed in pineal gland and retina.</title>
        <authorList>
            <person name="Andre E."/>
            <person name="Gawlas K."/>
            <person name="Becker-Andre M."/>
        </authorList>
    </citation>
    <scope>NUCLEOTIDE SEQUENCE [MRNA] (ISOFORM 2)</scope>
    <scope>FUNCTION AS TRANSCRIPTION ACTIVATOR (ISOFORMS 1 AND 2)</scope>
    <scope>TISSUE SPECIFICITY</scope>
    <scope>DNA-BINDING</scope>
    <scope>INDUCTION</scope>
</reference>
<reference key="3">
    <citation type="journal article" date="1996" name="Proc. Natl. Acad. Sci. U.S.A.">
        <title>Functional analysis of retinoid Z receptor beta, a brain-specific nuclear orphan receptor.</title>
        <authorList>
            <person name="Greiner E.F."/>
            <person name="Kirfel J."/>
            <person name="Greschik H."/>
            <person name="Doerflinger U."/>
            <person name="Becker P."/>
            <person name="Mercep A."/>
            <person name="Schuele R."/>
        </authorList>
    </citation>
    <scope>FUNCTION AS TRANSCRIPTION MODULATOR</scope>
    <scope>SUBUNIT</scope>
    <scope>DNA-BINDING</scope>
    <scope>DOMAIN</scope>
</reference>
<reference key="4">
    <citation type="journal article" date="1998" name="EMBO J.">
        <title>Disruption of retinoid-related orphan receptor beta changes circadian behavior, causes retinal degeneration and leads to vacillans phenotype in mice.</title>
        <authorList>
            <person name="Andre E."/>
            <person name="Conquet F."/>
            <person name="Steinmayr M."/>
            <person name="Stratton S.C."/>
            <person name="Porciatti V."/>
            <person name="Becker-Andre M."/>
        </authorList>
    </citation>
    <scope>TISSUE SPECIFICITY</scope>
</reference>
<reference key="5">
    <citation type="journal article" date="2001" name="EMBO J.">
        <title>X-ray structure of the orphan nuclear receptor RORbeta ligand-binding domain in the active conformation.</title>
        <authorList>
            <person name="Stehlin C."/>
            <person name="Wurtz J.-M."/>
            <person name="Steinmetz A."/>
            <person name="Greiner E."/>
            <person name="Schuele R."/>
            <person name="Moras D."/>
            <person name="Renaud J.-P."/>
        </authorList>
    </citation>
    <scope>X-RAY CRYSTALLOGRAPHY (1.9 ANGSTROMS) OF 212-463 IN COMPLEX WITH STEARIC ACID AND NCOA1 PEPTIDE</scope>
    <scope>DOMAIN</scope>
    <scope>MUTAGENESIS OF ALA-280; TYR-457 AND GLU-459</scope>
</reference>
<reference key="6">
    <citation type="journal article" date="2003" name="Nat. Struct. Biol.">
        <title>All-trans retinoic acid is a ligand for the orphan nuclear receptor ROR beta.</title>
        <authorList>
            <person name="Stehlin-Gaon C."/>
            <person name="Willmann D."/>
            <person name="Zeyer D."/>
            <person name="Sanglier S."/>
            <person name="van Dorsselaer A."/>
            <person name="Renaud J.-P."/>
            <person name="Moras D."/>
            <person name="Schule R."/>
        </authorList>
    </citation>
    <scope>X-RAY CRYSTALLOGRAPHY (1.5 ANGSTROMS) OF 219-462 IN COMPLEX WITH RETINOIC ACID AND PEPTIDE SRC-1</scope>
    <scope>FUNCTION AS TRANSCRIPTION ACTIVATOR</scope>
    <scope>IDENTIFICATION OF LIGANDS</scope>
</reference>
<organism>
    <name type="scientific">Rattus norvegicus</name>
    <name type="common">Rat</name>
    <dbReference type="NCBI Taxonomy" id="10116"/>
    <lineage>
        <taxon>Eukaryota</taxon>
        <taxon>Metazoa</taxon>
        <taxon>Chordata</taxon>
        <taxon>Craniata</taxon>
        <taxon>Vertebrata</taxon>
        <taxon>Euteleostomi</taxon>
        <taxon>Mammalia</taxon>
        <taxon>Eutheria</taxon>
        <taxon>Euarchontoglires</taxon>
        <taxon>Glires</taxon>
        <taxon>Rodentia</taxon>
        <taxon>Myomorpha</taxon>
        <taxon>Muroidea</taxon>
        <taxon>Muridae</taxon>
        <taxon>Murinae</taxon>
        <taxon>Rattus</taxon>
    </lineage>
</organism>
<gene>
    <name type="primary">Rorb</name>
    <name type="synonym">Nr1f2</name>
    <name type="synonym">Rzrb</name>
</gene>
<proteinExistence type="evidence at protein level"/>